<proteinExistence type="inferred from homology"/>
<reference key="1">
    <citation type="submission" date="2007-10" db="EMBL/GenBank/DDBJ databases">
        <title>Complete sequence of Desulfococcus oleovorans Hxd3.</title>
        <authorList>
            <consortium name="US DOE Joint Genome Institute"/>
            <person name="Copeland A."/>
            <person name="Lucas S."/>
            <person name="Lapidus A."/>
            <person name="Barry K."/>
            <person name="Glavina del Rio T."/>
            <person name="Dalin E."/>
            <person name="Tice H."/>
            <person name="Pitluck S."/>
            <person name="Kiss H."/>
            <person name="Brettin T."/>
            <person name="Bruce D."/>
            <person name="Detter J.C."/>
            <person name="Han C."/>
            <person name="Schmutz J."/>
            <person name="Larimer F."/>
            <person name="Land M."/>
            <person name="Hauser L."/>
            <person name="Kyrpides N."/>
            <person name="Kim E."/>
            <person name="Wawrik B."/>
            <person name="Richardson P."/>
        </authorList>
    </citation>
    <scope>NUCLEOTIDE SEQUENCE [LARGE SCALE GENOMIC DNA]</scope>
    <source>
        <strain>DSM 6200 / JCM 39069 / Hxd3</strain>
    </source>
</reference>
<sequence>MPRKREVPVRPVLPDARYNSKLVSMFIHKLMRDGKKSTAESILYKAFDIINEKTGKAPLEVFEEALANVKPKLEVKSRRVGGSTYQVPTEIREARRLALAIRWMIGYARSRAEKGMDVKLAGELMDAAGQRGASVKKREDTHKMAEANKAFAHYRW</sequence>
<comment type="function">
    <text evidence="1">One of the primary rRNA binding proteins, it binds directly to 16S rRNA where it nucleates assembly of the head domain of the 30S subunit. Is located at the subunit interface close to the decoding center, probably blocks exit of the E-site tRNA.</text>
</comment>
<comment type="subunit">
    <text evidence="1">Part of the 30S ribosomal subunit. Contacts proteins S9 and S11.</text>
</comment>
<comment type="similarity">
    <text evidence="1">Belongs to the universal ribosomal protein uS7 family.</text>
</comment>
<keyword id="KW-1185">Reference proteome</keyword>
<keyword id="KW-0687">Ribonucleoprotein</keyword>
<keyword id="KW-0689">Ribosomal protein</keyword>
<keyword id="KW-0694">RNA-binding</keyword>
<keyword id="KW-0699">rRNA-binding</keyword>
<keyword id="KW-0820">tRNA-binding</keyword>
<accession>A8ZV54</accession>
<dbReference type="EMBL" id="CP000859">
    <property type="protein sequence ID" value="ABW66515.1"/>
    <property type="molecule type" value="Genomic_DNA"/>
</dbReference>
<dbReference type="RefSeq" id="WP_012174134.1">
    <property type="nucleotide sequence ID" value="NC_009943.1"/>
</dbReference>
<dbReference type="SMR" id="A8ZV54"/>
<dbReference type="STRING" id="96561.Dole_0705"/>
<dbReference type="KEGG" id="dol:Dole_0705"/>
<dbReference type="eggNOG" id="COG0049">
    <property type="taxonomic scope" value="Bacteria"/>
</dbReference>
<dbReference type="HOGENOM" id="CLU_072226_1_1_7"/>
<dbReference type="OrthoDB" id="9807653at2"/>
<dbReference type="Proteomes" id="UP000008561">
    <property type="component" value="Chromosome"/>
</dbReference>
<dbReference type="GO" id="GO:0015935">
    <property type="term" value="C:small ribosomal subunit"/>
    <property type="evidence" value="ECO:0007669"/>
    <property type="project" value="InterPro"/>
</dbReference>
<dbReference type="GO" id="GO:0019843">
    <property type="term" value="F:rRNA binding"/>
    <property type="evidence" value="ECO:0007669"/>
    <property type="project" value="UniProtKB-UniRule"/>
</dbReference>
<dbReference type="GO" id="GO:0003735">
    <property type="term" value="F:structural constituent of ribosome"/>
    <property type="evidence" value="ECO:0007669"/>
    <property type="project" value="InterPro"/>
</dbReference>
<dbReference type="GO" id="GO:0000049">
    <property type="term" value="F:tRNA binding"/>
    <property type="evidence" value="ECO:0007669"/>
    <property type="project" value="UniProtKB-UniRule"/>
</dbReference>
<dbReference type="GO" id="GO:0006412">
    <property type="term" value="P:translation"/>
    <property type="evidence" value="ECO:0007669"/>
    <property type="project" value="UniProtKB-UniRule"/>
</dbReference>
<dbReference type="CDD" id="cd14869">
    <property type="entry name" value="uS7_Bacteria"/>
    <property type="match status" value="1"/>
</dbReference>
<dbReference type="FunFam" id="1.10.455.10:FF:000001">
    <property type="entry name" value="30S ribosomal protein S7"/>
    <property type="match status" value="1"/>
</dbReference>
<dbReference type="Gene3D" id="1.10.455.10">
    <property type="entry name" value="Ribosomal protein S7 domain"/>
    <property type="match status" value="1"/>
</dbReference>
<dbReference type="HAMAP" id="MF_00480_B">
    <property type="entry name" value="Ribosomal_uS7_B"/>
    <property type="match status" value="1"/>
</dbReference>
<dbReference type="InterPro" id="IPR000235">
    <property type="entry name" value="Ribosomal_uS7"/>
</dbReference>
<dbReference type="InterPro" id="IPR005717">
    <property type="entry name" value="Ribosomal_uS7_bac/org-type"/>
</dbReference>
<dbReference type="InterPro" id="IPR020606">
    <property type="entry name" value="Ribosomal_uS7_CS"/>
</dbReference>
<dbReference type="InterPro" id="IPR023798">
    <property type="entry name" value="Ribosomal_uS7_dom"/>
</dbReference>
<dbReference type="InterPro" id="IPR036823">
    <property type="entry name" value="Ribosomal_uS7_dom_sf"/>
</dbReference>
<dbReference type="NCBIfam" id="TIGR01029">
    <property type="entry name" value="rpsG_bact"/>
    <property type="match status" value="1"/>
</dbReference>
<dbReference type="PANTHER" id="PTHR11205">
    <property type="entry name" value="RIBOSOMAL PROTEIN S7"/>
    <property type="match status" value="1"/>
</dbReference>
<dbReference type="Pfam" id="PF00177">
    <property type="entry name" value="Ribosomal_S7"/>
    <property type="match status" value="1"/>
</dbReference>
<dbReference type="PIRSF" id="PIRSF002122">
    <property type="entry name" value="RPS7p_RPS7a_RPS5e_RPS7o"/>
    <property type="match status" value="1"/>
</dbReference>
<dbReference type="SUPFAM" id="SSF47973">
    <property type="entry name" value="Ribosomal protein S7"/>
    <property type="match status" value="1"/>
</dbReference>
<dbReference type="PROSITE" id="PS00052">
    <property type="entry name" value="RIBOSOMAL_S7"/>
    <property type="match status" value="1"/>
</dbReference>
<feature type="chain" id="PRO_1000125932" description="Small ribosomal subunit protein uS7">
    <location>
        <begin position="1"/>
        <end position="156"/>
    </location>
</feature>
<evidence type="ECO:0000255" key="1">
    <source>
        <dbReference type="HAMAP-Rule" id="MF_00480"/>
    </source>
</evidence>
<evidence type="ECO:0000305" key="2"/>
<name>RS7_DESOH</name>
<protein>
    <recommendedName>
        <fullName evidence="1">Small ribosomal subunit protein uS7</fullName>
    </recommendedName>
    <alternativeName>
        <fullName evidence="2">30S ribosomal protein S7</fullName>
    </alternativeName>
</protein>
<gene>
    <name evidence="1" type="primary">rpsG</name>
    <name type="ordered locus">Dole_0705</name>
</gene>
<organism>
    <name type="scientific">Desulfosudis oleivorans (strain DSM 6200 / JCM 39069 / Hxd3)</name>
    <name type="common">Desulfococcus oleovorans</name>
    <dbReference type="NCBI Taxonomy" id="96561"/>
    <lineage>
        <taxon>Bacteria</taxon>
        <taxon>Pseudomonadati</taxon>
        <taxon>Thermodesulfobacteriota</taxon>
        <taxon>Desulfobacteria</taxon>
        <taxon>Desulfobacterales</taxon>
        <taxon>Desulfosudaceae</taxon>
        <taxon>Desulfosudis</taxon>
    </lineage>
</organism>